<feature type="chain" id="PRO_0000208238" description="Dual-action ribosomal maturation protein DarP">
    <location>
        <begin position="1"/>
        <end position="189"/>
    </location>
</feature>
<feature type="region of interest" description="Disordered" evidence="2">
    <location>
        <begin position="1"/>
        <end position="22"/>
    </location>
</feature>
<proteinExistence type="inferred from homology"/>
<organism>
    <name type="scientific">Xylella fastidiosa (strain Temecula1 / ATCC 700964)</name>
    <dbReference type="NCBI Taxonomy" id="183190"/>
    <lineage>
        <taxon>Bacteria</taxon>
        <taxon>Pseudomonadati</taxon>
        <taxon>Pseudomonadota</taxon>
        <taxon>Gammaproteobacteria</taxon>
        <taxon>Lysobacterales</taxon>
        <taxon>Lysobacteraceae</taxon>
        <taxon>Xylella</taxon>
    </lineage>
</organism>
<reference key="1">
    <citation type="journal article" date="2003" name="J. Bacteriol.">
        <title>Comparative analyses of the complete genome sequences of Pierce's disease and citrus variegated chlorosis strains of Xylella fastidiosa.</title>
        <authorList>
            <person name="Van Sluys M.A."/>
            <person name="de Oliveira M.C."/>
            <person name="Monteiro-Vitorello C.B."/>
            <person name="Miyaki C.Y."/>
            <person name="Furlan L.R."/>
            <person name="Camargo L.E.A."/>
            <person name="da Silva A.C.R."/>
            <person name="Moon D.H."/>
            <person name="Takita M.A."/>
            <person name="Lemos E.G.M."/>
            <person name="Machado M.A."/>
            <person name="Ferro M.I.T."/>
            <person name="da Silva F.R."/>
            <person name="Goldman M.H.S."/>
            <person name="Goldman G.H."/>
            <person name="Lemos M.V.F."/>
            <person name="El-Dorry H."/>
            <person name="Tsai S.M."/>
            <person name="Carrer H."/>
            <person name="Carraro D.M."/>
            <person name="de Oliveira R.C."/>
            <person name="Nunes L.R."/>
            <person name="Siqueira W.J."/>
            <person name="Coutinho L.L."/>
            <person name="Kimura E.T."/>
            <person name="Ferro E.S."/>
            <person name="Harakava R."/>
            <person name="Kuramae E.E."/>
            <person name="Marino C.L."/>
            <person name="Giglioti E."/>
            <person name="Abreu I.L."/>
            <person name="Alves L.M.C."/>
            <person name="do Amaral A.M."/>
            <person name="Baia G.S."/>
            <person name="Blanco S.R."/>
            <person name="Brito M.S."/>
            <person name="Cannavan F.S."/>
            <person name="Celestino A.V."/>
            <person name="da Cunha A.F."/>
            <person name="Fenille R.C."/>
            <person name="Ferro J.A."/>
            <person name="Formighieri E.F."/>
            <person name="Kishi L.T."/>
            <person name="Leoni S.G."/>
            <person name="Oliveira A.R."/>
            <person name="Rosa V.E. Jr."/>
            <person name="Sassaki F.T."/>
            <person name="Sena J.A.D."/>
            <person name="de Souza A.A."/>
            <person name="Truffi D."/>
            <person name="Tsukumo F."/>
            <person name="Yanai G.M."/>
            <person name="Zaros L.G."/>
            <person name="Civerolo E.L."/>
            <person name="Simpson A.J.G."/>
            <person name="Almeida N.F. Jr."/>
            <person name="Setubal J.C."/>
            <person name="Kitajima J.P."/>
        </authorList>
    </citation>
    <scope>NUCLEOTIDE SEQUENCE [LARGE SCALE GENOMIC DNA]</scope>
    <source>
        <strain>Temecula1 / ATCC 700964</strain>
    </source>
</reference>
<evidence type="ECO:0000255" key="1">
    <source>
        <dbReference type="HAMAP-Rule" id="MF_00765"/>
    </source>
</evidence>
<evidence type="ECO:0000256" key="2">
    <source>
        <dbReference type="SAM" id="MobiDB-lite"/>
    </source>
</evidence>
<sequence length="189" mass="21679">MWKNGAMRGCNKETGEFLGPSRSQQRRTALEVLVLSEKLAALTPAQLAKLPIPERLLPHITETKRITSHIARKRQLAFLAKQMRREDDTTLEAIREKLNASGIQAQREVATLHRTEQWRKRLLEEGDSALTELLNQYPQADCGKLRQLLRNSKTEQARNKAPQAFRELYQVLHGLIITQNSDNQHQTPQ</sequence>
<accession>Q87E99</accession>
<comment type="function">
    <text evidence="1">Member of a network of 50S ribosomal subunit biogenesis factors which assembles along the 30S-50S interface, preventing incorrect 23S rRNA structures from forming. Promotes peptidyl transferase center (PTC) maturation.</text>
</comment>
<comment type="subcellular location">
    <subcellularLocation>
        <location evidence="1">Cytoplasm</location>
    </subcellularLocation>
    <text evidence="1">Associates with late stage pre-50S ribosomal subunits.</text>
</comment>
<comment type="similarity">
    <text evidence="1">Belongs to the DarP family.</text>
</comment>
<gene>
    <name evidence="1" type="primary">darP</name>
    <name type="ordered locus">PD_0419</name>
</gene>
<keyword id="KW-0963">Cytoplasm</keyword>
<keyword id="KW-1185">Reference proteome</keyword>
<keyword id="KW-0690">Ribosome biogenesis</keyword>
<keyword id="KW-0694">RNA-binding</keyword>
<keyword id="KW-0699">rRNA-binding</keyword>
<protein>
    <recommendedName>
        <fullName evidence="1">Dual-action ribosomal maturation protein DarP</fullName>
    </recommendedName>
    <alternativeName>
        <fullName evidence="1">Large ribosomal subunit assembly factor DarP</fullName>
    </alternativeName>
</protein>
<name>DARP_XYLFT</name>
<dbReference type="EMBL" id="AE009442">
    <property type="protein sequence ID" value="AAO28298.1"/>
    <property type="molecule type" value="Genomic_DNA"/>
</dbReference>
<dbReference type="SMR" id="Q87E99"/>
<dbReference type="KEGG" id="xft:PD_0419"/>
<dbReference type="HOGENOM" id="CLU_106757_0_0_6"/>
<dbReference type="Proteomes" id="UP000002516">
    <property type="component" value="Chromosome"/>
</dbReference>
<dbReference type="GO" id="GO:0005829">
    <property type="term" value="C:cytosol"/>
    <property type="evidence" value="ECO:0007669"/>
    <property type="project" value="TreeGrafter"/>
</dbReference>
<dbReference type="GO" id="GO:0043022">
    <property type="term" value="F:ribosome binding"/>
    <property type="evidence" value="ECO:0007669"/>
    <property type="project" value="UniProtKB-UniRule"/>
</dbReference>
<dbReference type="GO" id="GO:0019843">
    <property type="term" value="F:rRNA binding"/>
    <property type="evidence" value="ECO:0007669"/>
    <property type="project" value="UniProtKB-UniRule"/>
</dbReference>
<dbReference type="GO" id="GO:1902626">
    <property type="term" value="P:assembly of large subunit precursor of preribosome"/>
    <property type="evidence" value="ECO:0007669"/>
    <property type="project" value="UniProtKB-UniRule"/>
</dbReference>
<dbReference type="CDD" id="cd16331">
    <property type="entry name" value="YjgA-like"/>
    <property type="match status" value="1"/>
</dbReference>
<dbReference type="Gene3D" id="1.10.60.30">
    <property type="entry name" value="PSPTO4464-like domains"/>
    <property type="match status" value="2"/>
</dbReference>
<dbReference type="HAMAP" id="MF_00765">
    <property type="entry name" value="DarP"/>
    <property type="match status" value="1"/>
</dbReference>
<dbReference type="InterPro" id="IPR006839">
    <property type="entry name" value="DarP"/>
</dbReference>
<dbReference type="InterPro" id="IPR023153">
    <property type="entry name" value="DarP_sf"/>
</dbReference>
<dbReference type="NCBIfam" id="NF003593">
    <property type="entry name" value="PRK05255.1-1"/>
    <property type="match status" value="1"/>
</dbReference>
<dbReference type="PANTHER" id="PTHR38101">
    <property type="entry name" value="UPF0307 PROTEIN YJGA"/>
    <property type="match status" value="1"/>
</dbReference>
<dbReference type="PANTHER" id="PTHR38101:SF1">
    <property type="entry name" value="UPF0307 PROTEIN YJGA"/>
    <property type="match status" value="1"/>
</dbReference>
<dbReference type="Pfam" id="PF04751">
    <property type="entry name" value="DarP"/>
    <property type="match status" value="1"/>
</dbReference>
<dbReference type="PIRSF" id="PIRSF016183">
    <property type="entry name" value="UCP016183"/>
    <property type="match status" value="1"/>
</dbReference>
<dbReference type="SUPFAM" id="SSF158710">
    <property type="entry name" value="PSPTO4464-like"/>
    <property type="match status" value="1"/>
</dbReference>